<dbReference type="EC" id="2.1.1.172" evidence="1"/>
<dbReference type="EMBL" id="CP001138">
    <property type="protein sequence ID" value="ACH52666.1"/>
    <property type="molecule type" value="Genomic_DNA"/>
</dbReference>
<dbReference type="RefSeq" id="WP_001272293.1">
    <property type="nucleotide sequence ID" value="NC_011149.1"/>
</dbReference>
<dbReference type="SMR" id="B5F512"/>
<dbReference type="KEGG" id="sea:SeAg_B4877"/>
<dbReference type="HOGENOM" id="CLU_049581_0_1_6"/>
<dbReference type="Proteomes" id="UP000008819">
    <property type="component" value="Chromosome"/>
</dbReference>
<dbReference type="GO" id="GO:0005737">
    <property type="term" value="C:cytoplasm"/>
    <property type="evidence" value="ECO:0007669"/>
    <property type="project" value="UniProtKB-SubCell"/>
</dbReference>
<dbReference type="GO" id="GO:0052914">
    <property type="term" value="F:16S rRNA (guanine(1207)-N(2))-methyltransferase activity"/>
    <property type="evidence" value="ECO:0007669"/>
    <property type="project" value="UniProtKB-EC"/>
</dbReference>
<dbReference type="GO" id="GO:0003676">
    <property type="term" value="F:nucleic acid binding"/>
    <property type="evidence" value="ECO:0007669"/>
    <property type="project" value="InterPro"/>
</dbReference>
<dbReference type="CDD" id="cd02440">
    <property type="entry name" value="AdoMet_MTases"/>
    <property type="match status" value="1"/>
</dbReference>
<dbReference type="FunFam" id="3.40.50.150:FF:000058">
    <property type="entry name" value="Ribosomal RNA small subunit methyltransferase C"/>
    <property type="match status" value="1"/>
</dbReference>
<dbReference type="Gene3D" id="3.40.50.150">
    <property type="entry name" value="Vaccinia Virus protein VP39"/>
    <property type="match status" value="2"/>
</dbReference>
<dbReference type="HAMAP" id="MF_01862">
    <property type="entry name" value="16SrRNA_methyltr_C"/>
    <property type="match status" value="1"/>
</dbReference>
<dbReference type="InterPro" id="IPR002052">
    <property type="entry name" value="DNA_methylase_N6_adenine_CS"/>
</dbReference>
<dbReference type="InterPro" id="IPR013675">
    <property type="entry name" value="Mtase_sm_N"/>
</dbReference>
<dbReference type="InterPro" id="IPR023543">
    <property type="entry name" value="rRNA_ssu_MeTfrase_C"/>
</dbReference>
<dbReference type="InterPro" id="IPR046977">
    <property type="entry name" value="RsmC/RlmG"/>
</dbReference>
<dbReference type="InterPro" id="IPR029063">
    <property type="entry name" value="SAM-dependent_MTases_sf"/>
</dbReference>
<dbReference type="InterPro" id="IPR007848">
    <property type="entry name" value="Small_mtfrase_dom"/>
</dbReference>
<dbReference type="NCBIfam" id="NF007023">
    <property type="entry name" value="PRK09489.1"/>
    <property type="match status" value="1"/>
</dbReference>
<dbReference type="PANTHER" id="PTHR47816">
    <property type="entry name" value="RIBOSOMAL RNA SMALL SUBUNIT METHYLTRANSFERASE C"/>
    <property type="match status" value="1"/>
</dbReference>
<dbReference type="PANTHER" id="PTHR47816:SF4">
    <property type="entry name" value="RIBOSOMAL RNA SMALL SUBUNIT METHYLTRANSFERASE C"/>
    <property type="match status" value="1"/>
</dbReference>
<dbReference type="Pfam" id="PF05175">
    <property type="entry name" value="MTS"/>
    <property type="match status" value="1"/>
</dbReference>
<dbReference type="Pfam" id="PF08468">
    <property type="entry name" value="MTS_N"/>
    <property type="match status" value="1"/>
</dbReference>
<dbReference type="SUPFAM" id="SSF53335">
    <property type="entry name" value="S-adenosyl-L-methionine-dependent methyltransferases"/>
    <property type="match status" value="1"/>
</dbReference>
<organism>
    <name type="scientific">Salmonella agona (strain SL483)</name>
    <dbReference type="NCBI Taxonomy" id="454166"/>
    <lineage>
        <taxon>Bacteria</taxon>
        <taxon>Pseudomonadati</taxon>
        <taxon>Pseudomonadota</taxon>
        <taxon>Gammaproteobacteria</taxon>
        <taxon>Enterobacterales</taxon>
        <taxon>Enterobacteriaceae</taxon>
        <taxon>Salmonella</taxon>
    </lineage>
</organism>
<keyword id="KW-0963">Cytoplasm</keyword>
<keyword id="KW-0489">Methyltransferase</keyword>
<keyword id="KW-0698">rRNA processing</keyword>
<keyword id="KW-0949">S-adenosyl-L-methionine</keyword>
<keyword id="KW-0808">Transferase</keyword>
<reference key="1">
    <citation type="journal article" date="2011" name="J. Bacteriol.">
        <title>Comparative genomics of 28 Salmonella enterica isolates: evidence for CRISPR-mediated adaptive sublineage evolution.</title>
        <authorList>
            <person name="Fricke W.F."/>
            <person name="Mammel M.K."/>
            <person name="McDermott P.F."/>
            <person name="Tartera C."/>
            <person name="White D.G."/>
            <person name="Leclerc J.E."/>
            <person name="Ravel J."/>
            <person name="Cebula T.A."/>
        </authorList>
    </citation>
    <scope>NUCLEOTIDE SEQUENCE [LARGE SCALE GENOMIC DNA]</scope>
    <source>
        <strain>SL483</strain>
    </source>
</reference>
<accession>B5F512</accession>
<feature type="chain" id="PRO_0000369751" description="Ribosomal RNA small subunit methyltransferase C">
    <location>
        <begin position="1"/>
        <end position="342"/>
    </location>
</feature>
<protein>
    <recommendedName>
        <fullName evidence="1">Ribosomal RNA small subunit methyltransferase C</fullName>
        <ecNumber evidence="1">2.1.1.172</ecNumber>
    </recommendedName>
    <alternativeName>
        <fullName evidence="1">16S rRNA m2G1207 methyltransferase</fullName>
    </alternativeName>
    <alternativeName>
        <fullName evidence="1">rRNA (guanine-N(2)-)-methyltransferase RsmC</fullName>
    </alternativeName>
</protein>
<sequence>MSAFTPASEVLLRHSDDFEQSRILFAGDLQDDLPARFECAASRAYTQQFHHWQALSRQMGDNVRFSLVAQASDVADCDTLIYYWPKNKPEAQFQLMNILSLMPVGSDVFVVGENRSGVRSAEPMLADYAPLNKVDSARRCGLYHGRLEKQPQFSLESWWAEYNIDGLTIKTLPGVFSRDGLDVGSQLLLSTLTPHTKGKVLDVGCGAGVLSAALASHSPKVRLTLCDVSAPAVEASRATLAANGLEGEVFASNVFSEVKGRFDMIISNPPFHDGMQTSLDAAQTLIRGAVRHLNSGGELRIVANAFLPYPKILDETFGFHEVIAQTGRFKVYRTVMTRQAKK</sequence>
<name>RSMC_SALA4</name>
<proteinExistence type="inferred from homology"/>
<evidence type="ECO:0000255" key="1">
    <source>
        <dbReference type="HAMAP-Rule" id="MF_01862"/>
    </source>
</evidence>
<gene>
    <name evidence="1" type="primary">rsmC</name>
    <name type="ordered locus">SeAg_B4877</name>
</gene>
<comment type="function">
    <text evidence="1">Specifically methylates the guanine in position 1207 of 16S rRNA in the 30S particle.</text>
</comment>
<comment type="catalytic activity">
    <reaction evidence="1">
        <text>guanosine(1207) in 16S rRNA + S-adenosyl-L-methionine = N(2)-methylguanosine(1207) in 16S rRNA + S-adenosyl-L-homocysteine + H(+)</text>
        <dbReference type="Rhea" id="RHEA:42736"/>
        <dbReference type="Rhea" id="RHEA-COMP:10213"/>
        <dbReference type="Rhea" id="RHEA-COMP:10214"/>
        <dbReference type="ChEBI" id="CHEBI:15378"/>
        <dbReference type="ChEBI" id="CHEBI:57856"/>
        <dbReference type="ChEBI" id="CHEBI:59789"/>
        <dbReference type="ChEBI" id="CHEBI:74269"/>
        <dbReference type="ChEBI" id="CHEBI:74481"/>
        <dbReference type="EC" id="2.1.1.172"/>
    </reaction>
</comment>
<comment type="subunit">
    <text evidence="1">Monomer.</text>
</comment>
<comment type="subcellular location">
    <subcellularLocation>
        <location evidence="1">Cytoplasm</location>
    </subcellularLocation>
</comment>
<comment type="similarity">
    <text evidence="1">Belongs to the methyltransferase superfamily. RsmC family.</text>
</comment>